<sequence length="304" mass="33804">MTKQSLPDVAKETHSERFAPIDWVGMGAIELPVMLKQADGVYRIPARVDAKVSLDKKPSRGIHMSRLYLLSQELLTKSELSLGLLGTVTSEFLRTHEDLSTKALVQVQFEAPLVRKALKSNNQAWRSYPVITSAFNEEGQISYFVEVVVTYSSTCPASAALSRQLIQDGFKQNFSTDKPLDFDVVHSWLGTPQGIVATPHAQRSFARVKAEVGANYNYGDLIDIVEEALQTAVQGAVKREDEQEFALRNGQNLMFCEDAARRVKEALDAKADVLDYVAEFSHVESLHPHNAVSHISKGLKLRSF</sequence>
<gene>
    <name evidence="1" type="primary">folE2</name>
    <name type="ordered locus">Bd2446</name>
</gene>
<keyword id="KW-0378">Hydrolase</keyword>
<keyword id="KW-1185">Reference proteome</keyword>
<organism>
    <name type="scientific">Bdellovibrio bacteriovorus (strain ATCC 15356 / DSM 50701 / NCIMB 9529 / HD100)</name>
    <dbReference type="NCBI Taxonomy" id="264462"/>
    <lineage>
        <taxon>Bacteria</taxon>
        <taxon>Pseudomonadati</taxon>
        <taxon>Bdellovibrionota</taxon>
        <taxon>Bdellovibrionia</taxon>
        <taxon>Bdellovibrionales</taxon>
        <taxon>Pseudobdellovibrionaceae</taxon>
        <taxon>Bdellovibrio</taxon>
    </lineage>
</organism>
<accession>Q6MKE9</accession>
<feature type="chain" id="PRO_0000147702" description="GTP cyclohydrolase FolE2">
    <location>
        <begin position="1"/>
        <end position="304"/>
    </location>
</feature>
<feature type="site" description="May be catalytically important" evidence="1">
    <location>
        <position position="155"/>
    </location>
</feature>
<dbReference type="EC" id="3.5.4.16" evidence="1"/>
<dbReference type="EMBL" id="BX842652">
    <property type="protein sequence ID" value="CAE80258.1"/>
    <property type="molecule type" value="Genomic_DNA"/>
</dbReference>
<dbReference type="RefSeq" id="WP_011164861.1">
    <property type="nucleotide sequence ID" value="NC_005363.1"/>
</dbReference>
<dbReference type="SMR" id="Q6MKE9"/>
<dbReference type="STRING" id="264462.Bd2446"/>
<dbReference type="GeneID" id="93013361"/>
<dbReference type="KEGG" id="bba:Bd2446"/>
<dbReference type="eggNOG" id="COG1469">
    <property type="taxonomic scope" value="Bacteria"/>
</dbReference>
<dbReference type="HOGENOM" id="CLU_062816_0_0_7"/>
<dbReference type="UniPathway" id="UPA00848">
    <property type="reaction ID" value="UER00151"/>
</dbReference>
<dbReference type="Proteomes" id="UP000008080">
    <property type="component" value="Chromosome"/>
</dbReference>
<dbReference type="GO" id="GO:0003934">
    <property type="term" value="F:GTP cyclohydrolase I activity"/>
    <property type="evidence" value="ECO:0007669"/>
    <property type="project" value="UniProtKB-UniRule"/>
</dbReference>
<dbReference type="GO" id="GO:0046654">
    <property type="term" value="P:tetrahydrofolate biosynthetic process"/>
    <property type="evidence" value="ECO:0007669"/>
    <property type="project" value="UniProtKB-UniRule"/>
</dbReference>
<dbReference type="Gene3D" id="3.10.270.10">
    <property type="entry name" value="Urate Oxidase"/>
    <property type="match status" value="1"/>
</dbReference>
<dbReference type="HAMAP" id="MF_01527_B">
    <property type="entry name" value="GTP_cyclohydrol_B"/>
    <property type="match status" value="1"/>
</dbReference>
<dbReference type="InterPro" id="IPR022838">
    <property type="entry name" value="GTP_cyclohydrolase_FolE2"/>
</dbReference>
<dbReference type="InterPro" id="IPR003801">
    <property type="entry name" value="GTP_cyclohydrolase_FolE2/MptA"/>
</dbReference>
<dbReference type="NCBIfam" id="NF010200">
    <property type="entry name" value="PRK13674.1-1"/>
    <property type="match status" value="1"/>
</dbReference>
<dbReference type="PANTHER" id="PTHR36445">
    <property type="entry name" value="GTP CYCLOHYDROLASE MPTA"/>
    <property type="match status" value="1"/>
</dbReference>
<dbReference type="PANTHER" id="PTHR36445:SF1">
    <property type="entry name" value="GTP CYCLOHYDROLASE MPTA"/>
    <property type="match status" value="1"/>
</dbReference>
<dbReference type="Pfam" id="PF02649">
    <property type="entry name" value="GCHY-1"/>
    <property type="match status" value="1"/>
</dbReference>
<proteinExistence type="inferred from homology"/>
<evidence type="ECO:0000255" key="1">
    <source>
        <dbReference type="HAMAP-Rule" id="MF_01527"/>
    </source>
</evidence>
<reference key="1">
    <citation type="journal article" date="2004" name="Science">
        <title>A predator unmasked: life cycle of Bdellovibrio bacteriovorus from a genomic perspective.</title>
        <authorList>
            <person name="Rendulic S."/>
            <person name="Jagtap P."/>
            <person name="Rosinus A."/>
            <person name="Eppinger M."/>
            <person name="Baar C."/>
            <person name="Lanz C."/>
            <person name="Keller H."/>
            <person name="Lambert C."/>
            <person name="Evans K.J."/>
            <person name="Goesmann A."/>
            <person name="Meyer F."/>
            <person name="Sockett R.E."/>
            <person name="Schuster S.C."/>
        </authorList>
    </citation>
    <scope>NUCLEOTIDE SEQUENCE [LARGE SCALE GENOMIC DNA]</scope>
    <source>
        <strain>ATCC 15356 / DSM 50701 / NCIMB 9529 / HD100</strain>
    </source>
</reference>
<name>GCH4_BDEBA</name>
<comment type="function">
    <text evidence="1">Converts GTP to 7,8-dihydroneopterin triphosphate.</text>
</comment>
<comment type="catalytic activity">
    <reaction evidence="1">
        <text>GTP + H2O = 7,8-dihydroneopterin 3'-triphosphate + formate + H(+)</text>
        <dbReference type="Rhea" id="RHEA:17473"/>
        <dbReference type="ChEBI" id="CHEBI:15377"/>
        <dbReference type="ChEBI" id="CHEBI:15378"/>
        <dbReference type="ChEBI" id="CHEBI:15740"/>
        <dbReference type="ChEBI" id="CHEBI:37565"/>
        <dbReference type="ChEBI" id="CHEBI:58462"/>
        <dbReference type="EC" id="3.5.4.16"/>
    </reaction>
</comment>
<comment type="pathway">
    <text evidence="1">Cofactor biosynthesis; 7,8-dihydroneopterin triphosphate biosynthesis; 7,8-dihydroneopterin triphosphate from GTP: step 1/1.</text>
</comment>
<comment type="similarity">
    <text evidence="1">Belongs to the GTP cyclohydrolase IV family.</text>
</comment>
<protein>
    <recommendedName>
        <fullName evidence="1">GTP cyclohydrolase FolE2</fullName>
        <ecNumber evidence="1">3.5.4.16</ecNumber>
    </recommendedName>
</protein>